<name>YB89_SCHPO</name>
<proteinExistence type="inferred from homology"/>
<gene>
    <name type="ORF">SPBC29A3.09c</name>
</gene>
<comment type="subcellular location">
    <subcellularLocation>
        <location evidence="2">Cytoplasm</location>
    </subcellularLocation>
</comment>
<comment type="similarity">
    <text evidence="3">Belongs to the ABC transporter superfamily.</text>
</comment>
<sequence length="736" mass="83762">MEQVIQNNCSEVDPHVLSYCTGYANDAIKDVDEASDHTISLIRNLLLDAGAREEAVQLIQNELEKQFKEREEHLDTLQTNGLVRLKETIRMDSQSEISSTMGLVGEKMELDAVKGRKVESRVDRRKLEKAERKIRAKWEKRTIKAEYESSKLVQPEQKSYEEFYMAVNPLDLSGSNQGKSKDIKIDGIDLAFAGHRILTGASLTLAQGRRYGLTGRNGIGKSTLLRALSRREIAIPTHITILHVEQEMTGDDTPALQSVLDADVWRKYLIQDQEKITNRLSTIEKELEELSKDQTADQAISRRLERERDELDLRLLDIQNKLSEMDSDRAESRAATILAGLGFTQEMQSHATKTFSGGWRMRLSLARALFCQPDLLLLDEPSNMLDVPSIAFLSEYLQTYKNIVLVVSHDRSFLNEVATDIIHQHSERLDYYKGNFSQFYATREERCKNQLREYEKQMEYRKHLQSFIDKFRYNAAKSSEAQSRIKKLEKLPILEKPQTEEEVEFEFPPVEKISPPILQMSDVNFEYVPGHPILKHVDIDVQMDSRIGVVGPNGAGKSTMLKLLIEQLHPTSGIVSRHPRLRIAYFAQHHVDTLDLNLNALSFLAKTFPGKGEEEYRRHLGAFGVSGPLALQKMITLSGGQKSRVAFACLGLQNPHILILDEPTNHLDMESMDALTRAVKRFQGGVILVSHDVDFLDKTCTSIWQCDHNVVSKFDGTISQYKKFCLSQQPTMTIKT</sequence>
<organism>
    <name type="scientific">Schizosaccharomyces pombe (strain 972 / ATCC 24843)</name>
    <name type="common">Fission yeast</name>
    <dbReference type="NCBI Taxonomy" id="284812"/>
    <lineage>
        <taxon>Eukaryota</taxon>
        <taxon>Fungi</taxon>
        <taxon>Dikarya</taxon>
        <taxon>Ascomycota</taxon>
        <taxon>Taphrinomycotina</taxon>
        <taxon>Schizosaccharomycetes</taxon>
        <taxon>Schizosaccharomycetales</taxon>
        <taxon>Schizosaccharomycetaceae</taxon>
        <taxon>Schizosaccharomyces</taxon>
    </lineage>
</organism>
<keyword id="KW-0067">ATP-binding</keyword>
<keyword id="KW-0963">Cytoplasm</keyword>
<keyword id="KW-0547">Nucleotide-binding</keyword>
<keyword id="KW-1185">Reference proteome</keyword>
<keyword id="KW-0677">Repeat</keyword>
<evidence type="ECO:0000255" key="1">
    <source>
        <dbReference type="PROSITE-ProRule" id="PRU00434"/>
    </source>
</evidence>
<evidence type="ECO:0000269" key="2">
    <source>
    </source>
</evidence>
<evidence type="ECO:0000305" key="3"/>
<accession>O59672</accession>
<feature type="chain" id="PRO_0000310285" description="Uncharacterized ABC transporter ATP-binding protein C29A3.09c">
    <location>
        <begin position="1"/>
        <end position="736"/>
    </location>
</feature>
<feature type="domain" description="ABC transporter 1" evidence="1">
    <location>
        <begin position="183"/>
        <end position="459"/>
    </location>
</feature>
<feature type="domain" description="ABC transporter 2" evidence="1">
    <location>
        <begin position="518"/>
        <end position="734"/>
    </location>
</feature>
<feature type="binding site" evidence="1">
    <location>
        <begin position="215"/>
        <end position="222"/>
    </location>
    <ligand>
        <name>ATP</name>
        <dbReference type="ChEBI" id="CHEBI:30616"/>
    </ligand>
</feature>
<feature type="binding site" evidence="1">
    <location>
        <begin position="551"/>
        <end position="558"/>
    </location>
    <ligand>
        <name>ATP</name>
        <dbReference type="ChEBI" id="CHEBI:30616"/>
    </ligand>
</feature>
<protein>
    <recommendedName>
        <fullName>Uncharacterized ABC transporter ATP-binding protein C29A3.09c</fullName>
    </recommendedName>
</protein>
<reference key="1">
    <citation type="journal article" date="2002" name="Nature">
        <title>The genome sequence of Schizosaccharomyces pombe.</title>
        <authorList>
            <person name="Wood V."/>
            <person name="Gwilliam R."/>
            <person name="Rajandream M.A."/>
            <person name="Lyne M.H."/>
            <person name="Lyne R."/>
            <person name="Stewart A."/>
            <person name="Sgouros J.G."/>
            <person name="Peat N."/>
            <person name="Hayles J."/>
            <person name="Baker S.G."/>
            <person name="Basham D."/>
            <person name="Bowman S."/>
            <person name="Brooks K."/>
            <person name="Brown D."/>
            <person name="Brown S."/>
            <person name="Chillingworth T."/>
            <person name="Churcher C.M."/>
            <person name="Collins M."/>
            <person name="Connor R."/>
            <person name="Cronin A."/>
            <person name="Davis P."/>
            <person name="Feltwell T."/>
            <person name="Fraser A."/>
            <person name="Gentles S."/>
            <person name="Goble A."/>
            <person name="Hamlin N."/>
            <person name="Harris D.E."/>
            <person name="Hidalgo J."/>
            <person name="Hodgson G."/>
            <person name="Holroyd S."/>
            <person name="Hornsby T."/>
            <person name="Howarth S."/>
            <person name="Huckle E.J."/>
            <person name="Hunt S."/>
            <person name="Jagels K."/>
            <person name="James K.D."/>
            <person name="Jones L."/>
            <person name="Jones M."/>
            <person name="Leather S."/>
            <person name="McDonald S."/>
            <person name="McLean J."/>
            <person name="Mooney P."/>
            <person name="Moule S."/>
            <person name="Mungall K.L."/>
            <person name="Murphy L.D."/>
            <person name="Niblett D."/>
            <person name="Odell C."/>
            <person name="Oliver K."/>
            <person name="O'Neil S."/>
            <person name="Pearson D."/>
            <person name="Quail M.A."/>
            <person name="Rabbinowitsch E."/>
            <person name="Rutherford K.M."/>
            <person name="Rutter S."/>
            <person name="Saunders D."/>
            <person name="Seeger K."/>
            <person name="Sharp S."/>
            <person name="Skelton J."/>
            <person name="Simmonds M.N."/>
            <person name="Squares R."/>
            <person name="Squares S."/>
            <person name="Stevens K."/>
            <person name="Taylor K."/>
            <person name="Taylor R.G."/>
            <person name="Tivey A."/>
            <person name="Walsh S.V."/>
            <person name="Warren T."/>
            <person name="Whitehead S."/>
            <person name="Woodward J.R."/>
            <person name="Volckaert G."/>
            <person name="Aert R."/>
            <person name="Robben J."/>
            <person name="Grymonprez B."/>
            <person name="Weltjens I."/>
            <person name="Vanstreels E."/>
            <person name="Rieger M."/>
            <person name="Schaefer M."/>
            <person name="Mueller-Auer S."/>
            <person name="Gabel C."/>
            <person name="Fuchs M."/>
            <person name="Duesterhoeft A."/>
            <person name="Fritzc C."/>
            <person name="Holzer E."/>
            <person name="Moestl D."/>
            <person name="Hilbert H."/>
            <person name="Borzym K."/>
            <person name="Langer I."/>
            <person name="Beck A."/>
            <person name="Lehrach H."/>
            <person name="Reinhardt R."/>
            <person name="Pohl T.M."/>
            <person name="Eger P."/>
            <person name="Zimmermann W."/>
            <person name="Wedler H."/>
            <person name="Wambutt R."/>
            <person name="Purnelle B."/>
            <person name="Goffeau A."/>
            <person name="Cadieu E."/>
            <person name="Dreano S."/>
            <person name="Gloux S."/>
            <person name="Lelaure V."/>
            <person name="Mottier S."/>
            <person name="Galibert F."/>
            <person name="Aves S.J."/>
            <person name="Xiang Z."/>
            <person name="Hunt C."/>
            <person name="Moore K."/>
            <person name="Hurst S.M."/>
            <person name="Lucas M."/>
            <person name="Rochet M."/>
            <person name="Gaillardin C."/>
            <person name="Tallada V.A."/>
            <person name="Garzon A."/>
            <person name="Thode G."/>
            <person name="Daga R.R."/>
            <person name="Cruzado L."/>
            <person name="Jimenez J."/>
            <person name="Sanchez M."/>
            <person name="del Rey F."/>
            <person name="Benito J."/>
            <person name="Dominguez A."/>
            <person name="Revuelta J.L."/>
            <person name="Moreno S."/>
            <person name="Armstrong J."/>
            <person name="Forsburg S.L."/>
            <person name="Cerutti L."/>
            <person name="Lowe T."/>
            <person name="McCombie W.R."/>
            <person name="Paulsen I."/>
            <person name="Potashkin J."/>
            <person name="Shpakovski G.V."/>
            <person name="Ussery D."/>
            <person name="Barrell B.G."/>
            <person name="Nurse P."/>
        </authorList>
    </citation>
    <scope>NUCLEOTIDE SEQUENCE [LARGE SCALE GENOMIC DNA]</scope>
    <source>
        <strain>972 / ATCC 24843</strain>
    </source>
</reference>
<reference key="2">
    <citation type="journal article" date="2006" name="Nat. Biotechnol.">
        <title>ORFeome cloning and global analysis of protein localization in the fission yeast Schizosaccharomyces pombe.</title>
        <authorList>
            <person name="Matsuyama A."/>
            <person name="Arai R."/>
            <person name="Yashiroda Y."/>
            <person name="Shirai A."/>
            <person name="Kamata A."/>
            <person name="Sekido S."/>
            <person name="Kobayashi Y."/>
            <person name="Hashimoto A."/>
            <person name="Hamamoto M."/>
            <person name="Hiraoka Y."/>
            <person name="Horinouchi S."/>
            <person name="Yoshida M."/>
        </authorList>
    </citation>
    <scope>SUBCELLULAR LOCATION [LARGE SCALE ANALYSIS]</scope>
</reference>
<dbReference type="EMBL" id="CU329671">
    <property type="protein sequence ID" value="CAA18386.1"/>
    <property type="molecule type" value="Genomic_DNA"/>
</dbReference>
<dbReference type="PIR" id="T40080">
    <property type="entry name" value="T40080"/>
</dbReference>
<dbReference type="SMR" id="O59672"/>
<dbReference type="BioGRID" id="277123">
    <property type="interactions" value="104"/>
</dbReference>
<dbReference type="FunCoup" id="O59672">
    <property type="interactions" value="671"/>
</dbReference>
<dbReference type="IntAct" id="O59672">
    <property type="interactions" value="1"/>
</dbReference>
<dbReference type="STRING" id="284812.O59672"/>
<dbReference type="iPTMnet" id="O59672"/>
<dbReference type="PaxDb" id="4896-SPBC29A3.09c.1"/>
<dbReference type="EnsemblFungi" id="SPBC29A3.09c.1">
    <property type="protein sequence ID" value="SPBC29A3.09c.1:pep"/>
    <property type="gene ID" value="SPBC29A3.09c"/>
</dbReference>
<dbReference type="KEGG" id="spo:2540597"/>
<dbReference type="PomBase" id="SPBC29A3.09c"/>
<dbReference type="VEuPathDB" id="FungiDB:SPBC29A3.09c"/>
<dbReference type="eggNOG" id="KOG0062">
    <property type="taxonomic scope" value="Eukaryota"/>
</dbReference>
<dbReference type="HOGENOM" id="CLU_000604_36_6_1"/>
<dbReference type="InParanoid" id="O59672"/>
<dbReference type="OMA" id="CTHIADI"/>
<dbReference type="PhylomeDB" id="O59672"/>
<dbReference type="PRO" id="PR:O59672"/>
<dbReference type="Proteomes" id="UP000002485">
    <property type="component" value="Chromosome II"/>
</dbReference>
<dbReference type="GO" id="GO:0005829">
    <property type="term" value="C:cytosol"/>
    <property type="evidence" value="ECO:0007005"/>
    <property type="project" value="PomBase"/>
</dbReference>
<dbReference type="GO" id="GO:0022626">
    <property type="term" value="C:cytosolic ribosome"/>
    <property type="evidence" value="ECO:0000266"/>
    <property type="project" value="PomBase"/>
</dbReference>
<dbReference type="GO" id="GO:0005524">
    <property type="term" value="F:ATP binding"/>
    <property type="evidence" value="ECO:0000318"/>
    <property type="project" value="GO_Central"/>
</dbReference>
<dbReference type="GO" id="GO:0016887">
    <property type="term" value="F:ATP hydrolysis activity"/>
    <property type="evidence" value="ECO:0000255"/>
    <property type="project" value="PomBase"/>
</dbReference>
<dbReference type="GO" id="GO:0002182">
    <property type="term" value="P:cytoplasmic translational elongation"/>
    <property type="evidence" value="ECO:0000266"/>
    <property type="project" value="PomBase"/>
</dbReference>
<dbReference type="CDD" id="cd03221">
    <property type="entry name" value="ABCF_EF-3"/>
    <property type="match status" value="2"/>
</dbReference>
<dbReference type="FunFam" id="3.40.50.300:FF:000104">
    <property type="entry name" value="ATP-binding cassette sub-family F member 3"/>
    <property type="match status" value="1"/>
</dbReference>
<dbReference type="FunFam" id="3.40.50.300:FF:000882">
    <property type="entry name" value="Translation initiation regulator (Gcn20)"/>
    <property type="match status" value="1"/>
</dbReference>
<dbReference type="Gene3D" id="3.40.50.300">
    <property type="entry name" value="P-loop containing nucleotide triphosphate hydrolases"/>
    <property type="match status" value="2"/>
</dbReference>
<dbReference type="InterPro" id="IPR003593">
    <property type="entry name" value="AAA+_ATPase"/>
</dbReference>
<dbReference type="InterPro" id="IPR032781">
    <property type="entry name" value="ABC_tran_Xtn"/>
</dbReference>
<dbReference type="InterPro" id="IPR003439">
    <property type="entry name" value="ABC_transporter-like_ATP-bd"/>
</dbReference>
<dbReference type="InterPro" id="IPR017871">
    <property type="entry name" value="ABC_transporter-like_CS"/>
</dbReference>
<dbReference type="InterPro" id="IPR050611">
    <property type="entry name" value="ABCF_EF3_subfamily"/>
</dbReference>
<dbReference type="InterPro" id="IPR027417">
    <property type="entry name" value="P-loop_NTPase"/>
</dbReference>
<dbReference type="PANTHER" id="PTHR19211:SF117">
    <property type="entry name" value="ATP-BINDING CASSETTE SUB-FAMILY F MEMBER 3"/>
    <property type="match status" value="1"/>
</dbReference>
<dbReference type="PANTHER" id="PTHR19211">
    <property type="entry name" value="ATP-BINDING TRANSPORT PROTEIN-RELATED"/>
    <property type="match status" value="1"/>
</dbReference>
<dbReference type="Pfam" id="PF00005">
    <property type="entry name" value="ABC_tran"/>
    <property type="match status" value="2"/>
</dbReference>
<dbReference type="Pfam" id="PF12848">
    <property type="entry name" value="ABC_tran_Xtn"/>
    <property type="match status" value="1"/>
</dbReference>
<dbReference type="SMART" id="SM00382">
    <property type="entry name" value="AAA"/>
    <property type="match status" value="2"/>
</dbReference>
<dbReference type="SUPFAM" id="SSF52540">
    <property type="entry name" value="P-loop containing nucleoside triphosphate hydrolases"/>
    <property type="match status" value="2"/>
</dbReference>
<dbReference type="PROSITE" id="PS00211">
    <property type="entry name" value="ABC_TRANSPORTER_1"/>
    <property type="match status" value="1"/>
</dbReference>
<dbReference type="PROSITE" id="PS50893">
    <property type="entry name" value="ABC_TRANSPORTER_2"/>
    <property type="match status" value="2"/>
</dbReference>